<accession>B0SJ57</accession>
<comment type="function">
    <text evidence="1">Binds directly to 16S ribosomal RNA.</text>
</comment>
<comment type="similarity">
    <text evidence="1">Belongs to the bacterial ribosomal protein bS20 family.</text>
</comment>
<organism>
    <name type="scientific">Leptospira biflexa serovar Patoc (strain Patoc 1 / ATCC 23582 / Paris)</name>
    <dbReference type="NCBI Taxonomy" id="456481"/>
    <lineage>
        <taxon>Bacteria</taxon>
        <taxon>Pseudomonadati</taxon>
        <taxon>Spirochaetota</taxon>
        <taxon>Spirochaetia</taxon>
        <taxon>Leptospirales</taxon>
        <taxon>Leptospiraceae</taxon>
        <taxon>Leptospira</taxon>
    </lineage>
</organism>
<feature type="chain" id="PRO_1000126470" description="Small ribosomal subunit protein bS20">
    <location>
        <begin position="1"/>
        <end position="91"/>
    </location>
</feature>
<feature type="region of interest" description="Disordered" evidence="2">
    <location>
        <begin position="1"/>
        <end position="26"/>
    </location>
</feature>
<name>RS20_LEPBP</name>
<sequence>MANLKSSKKDIRRTARRKERNGEDRTELRTYARLLIKAIKSGDKTEALTVFSKLSSKLDRAAKTKLIHKKNADRKKSRMALRINSIEAKAA</sequence>
<dbReference type="EMBL" id="CP000786">
    <property type="protein sequence ID" value="ABZ96653.1"/>
    <property type="molecule type" value="Genomic_DNA"/>
</dbReference>
<dbReference type="RefSeq" id="WP_012387540.1">
    <property type="nucleotide sequence ID" value="NC_010602.1"/>
</dbReference>
<dbReference type="SMR" id="B0SJ57"/>
<dbReference type="STRING" id="456481.LEPBI_I0515"/>
<dbReference type="KEGG" id="lbi:LEPBI_I0515"/>
<dbReference type="HOGENOM" id="CLU_160655_3_1_12"/>
<dbReference type="OrthoDB" id="9808392at2"/>
<dbReference type="BioCyc" id="LBIF456481:LEPBI_RS02520-MONOMER"/>
<dbReference type="Proteomes" id="UP000001847">
    <property type="component" value="Chromosome I"/>
</dbReference>
<dbReference type="GO" id="GO:0005829">
    <property type="term" value="C:cytosol"/>
    <property type="evidence" value="ECO:0007669"/>
    <property type="project" value="TreeGrafter"/>
</dbReference>
<dbReference type="GO" id="GO:0015935">
    <property type="term" value="C:small ribosomal subunit"/>
    <property type="evidence" value="ECO:0007669"/>
    <property type="project" value="TreeGrafter"/>
</dbReference>
<dbReference type="GO" id="GO:0070181">
    <property type="term" value="F:small ribosomal subunit rRNA binding"/>
    <property type="evidence" value="ECO:0007669"/>
    <property type="project" value="TreeGrafter"/>
</dbReference>
<dbReference type="GO" id="GO:0003735">
    <property type="term" value="F:structural constituent of ribosome"/>
    <property type="evidence" value="ECO:0007669"/>
    <property type="project" value="InterPro"/>
</dbReference>
<dbReference type="GO" id="GO:0006412">
    <property type="term" value="P:translation"/>
    <property type="evidence" value="ECO:0007669"/>
    <property type="project" value="UniProtKB-UniRule"/>
</dbReference>
<dbReference type="Gene3D" id="1.20.58.110">
    <property type="entry name" value="Ribosomal protein S20"/>
    <property type="match status" value="1"/>
</dbReference>
<dbReference type="HAMAP" id="MF_00500">
    <property type="entry name" value="Ribosomal_bS20"/>
    <property type="match status" value="1"/>
</dbReference>
<dbReference type="InterPro" id="IPR002583">
    <property type="entry name" value="Ribosomal_bS20"/>
</dbReference>
<dbReference type="InterPro" id="IPR036510">
    <property type="entry name" value="Ribosomal_bS20_sf"/>
</dbReference>
<dbReference type="NCBIfam" id="TIGR00029">
    <property type="entry name" value="S20"/>
    <property type="match status" value="1"/>
</dbReference>
<dbReference type="PANTHER" id="PTHR33398">
    <property type="entry name" value="30S RIBOSOMAL PROTEIN S20"/>
    <property type="match status" value="1"/>
</dbReference>
<dbReference type="PANTHER" id="PTHR33398:SF1">
    <property type="entry name" value="SMALL RIBOSOMAL SUBUNIT PROTEIN BS20C"/>
    <property type="match status" value="1"/>
</dbReference>
<dbReference type="Pfam" id="PF01649">
    <property type="entry name" value="Ribosomal_S20p"/>
    <property type="match status" value="1"/>
</dbReference>
<dbReference type="SUPFAM" id="SSF46992">
    <property type="entry name" value="Ribosomal protein S20"/>
    <property type="match status" value="1"/>
</dbReference>
<protein>
    <recommendedName>
        <fullName evidence="1">Small ribosomal subunit protein bS20</fullName>
    </recommendedName>
    <alternativeName>
        <fullName evidence="3">30S ribosomal protein S20</fullName>
    </alternativeName>
</protein>
<gene>
    <name evidence="1" type="primary">rpsT</name>
    <name type="ordered locus">LEPBI_I0515</name>
</gene>
<evidence type="ECO:0000255" key="1">
    <source>
        <dbReference type="HAMAP-Rule" id="MF_00500"/>
    </source>
</evidence>
<evidence type="ECO:0000256" key="2">
    <source>
        <dbReference type="SAM" id="MobiDB-lite"/>
    </source>
</evidence>
<evidence type="ECO:0000305" key="3"/>
<reference key="1">
    <citation type="journal article" date="2008" name="PLoS ONE">
        <title>Genome sequence of the saprophyte Leptospira biflexa provides insights into the evolution of Leptospira and the pathogenesis of leptospirosis.</title>
        <authorList>
            <person name="Picardeau M."/>
            <person name="Bulach D.M."/>
            <person name="Bouchier C."/>
            <person name="Zuerner R.L."/>
            <person name="Zidane N."/>
            <person name="Wilson P.J."/>
            <person name="Creno S."/>
            <person name="Kuczek E.S."/>
            <person name="Bommezzadri S."/>
            <person name="Davis J.C."/>
            <person name="McGrath A."/>
            <person name="Johnson M.J."/>
            <person name="Boursaux-Eude C."/>
            <person name="Seemann T."/>
            <person name="Rouy Z."/>
            <person name="Coppel R.L."/>
            <person name="Rood J.I."/>
            <person name="Lajus A."/>
            <person name="Davies J.K."/>
            <person name="Medigue C."/>
            <person name="Adler B."/>
        </authorList>
    </citation>
    <scope>NUCLEOTIDE SEQUENCE [LARGE SCALE GENOMIC DNA]</scope>
    <source>
        <strain>Patoc 1 / ATCC 23582 / Paris</strain>
    </source>
</reference>
<keyword id="KW-1185">Reference proteome</keyword>
<keyword id="KW-0687">Ribonucleoprotein</keyword>
<keyword id="KW-0689">Ribosomal protein</keyword>
<keyword id="KW-0694">RNA-binding</keyword>
<keyword id="KW-0699">rRNA-binding</keyword>
<proteinExistence type="inferred from homology"/>